<sequence length="976" mass="114192">MEKQKPFALFVPPRSSSSQVSAVKPQTLGGDSTFFKSFNKCTEDDFEFPFAKTNLSKNGENIDSDPALQKVNFLPVLEQVGNSDCHYQEGLKDSDLENSEGLSRVYSKLYKEAEKIKKWKVSTEAELRQKESKLQENRKIIEAQRKAIQELQFGNEKVSLKLEEGIQENKDLIKENNATRHLCNLLKETCARSAEKTKKYEYEREETRQVYMDLNNNIEKMITAFEELRVQAENSRLEMHFKLKEDYEKIQHLEQEYKKEINDKEKQVSLLLIQITEKENKMKDLTFLLEESRDKVNQLEEKTKLQSENLKQSIEKQHHLTKELEDIKVSLQRSVSTQKALEEDLQIATKTICQLTEEKETQMEESNKARAAHSFVVTEFETTVCSLEELLRTEQQRLEKNEDQLKILTMELQKKSSELEEMTKLTNNKEVELEELKKVLGEKETLLYENKQFEKIAEELKGTEQELIGLLQAREKEVHDLEIQLTAITTSEQYYSKEVKDLKTELENEKLKNTELTSHCNKLSLENKELTQETSDMTLELKNQQEDINNNKKQEERMLKQIENLQETETQLRNELEYVREELKQKRDEVKCKLDKSEENCNNLRKQVENKNKYIEELQQENKALKKKGTAESKQLNVYEIKVNKLELELESAKQKFGEITDTYQKEIEDKKISEENLLEEVEKAKVIADEAVKLQKEIDKRCQHKIAEMVALMEKHKHQYDKIIEERDSELGLYKSKEQEQSSLRASLEIELSNLKAELLSVKKQLEIEREEKEKLKREAKENTATLKEKKDKKTQTFLLETPEIYWKLDSKAVPSQTVSRNFTSVDHGISKDKRDYLWTSAKNTLSTPLPKAYTVKTPTKPKLQQRENLNIPIEESKKKRKMAFEFDINSDSSETTDLLSMVSEEETLKTLYRNNNPPASHLCVKTPKKAPSSLTTPGSTLKFGAIRKMREDRWAVIAKMDRKKKLKEAEKLFV</sequence>
<feature type="chain" id="PRO_0000072362" description="Synaptonemal complex protein 1">
    <location>
        <begin position="1"/>
        <end position="976"/>
    </location>
</feature>
<feature type="region of interest" description="Interaction with SYCE3" evidence="6">
    <location>
        <begin position="206"/>
        <end position="362"/>
    </location>
</feature>
<feature type="region of interest" description="Required for pH-induced assembly of C-terminal ends into antiparallel tetramers" evidence="5">
    <location>
        <begin position="676"/>
        <end position="770"/>
    </location>
</feature>
<feature type="region of interest" description="DNA-binding" evidence="5">
    <location>
        <begin position="784"/>
        <end position="976"/>
    </location>
</feature>
<feature type="coiled-coil region" evidence="3">
    <location>
        <begin position="211"/>
        <end position="316"/>
    </location>
</feature>
<feature type="coiled-coil region" evidence="3">
    <location>
        <begin position="391"/>
        <end position="439"/>
    </location>
</feature>
<feature type="coiled-coil region" evidence="3">
    <location>
        <begin position="499"/>
        <end position="685"/>
    </location>
</feature>
<feature type="coiled-coil region" evidence="3 5">
    <location>
        <begin position="739"/>
        <end position="798"/>
    </location>
</feature>
<feature type="short sequence motif" description="Mediates head to head self-assembly of N-terminal ends" evidence="5">
    <location>
        <begin position="101"/>
        <end position="111"/>
    </location>
</feature>
<feature type="short sequence motif" description="Nuclear localization signal" evidence="3">
    <location>
        <begin position="117"/>
        <end position="120"/>
    </location>
</feature>
<feature type="short sequence motif" description="Nuclear localization signal" evidence="3">
    <location>
        <begin position="679"/>
        <end position="682"/>
    </location>
</feature>
<feature type="short sequence motif" description="Nuclear localization signal" evidence="3">
    <location>
        <begin position="880"/>
        <end position="883"/>
    </location>
</feature>
<feature type="sequence variant" id="VAR_046993" description="In dbSNP:rs12563933.">
    <original>E</original>
    <variation>D</variation>
    <location>
        <position position="78"/>
    </location>
</feature>
<feature type="sequence variant" id="VAR_046994" description="In dbSNP:rs1053812." evidence="7">
    <original>E</original>
    <variation>D</variation>
    <location>
        <position position="805"/>
    </location>
</feature>
<feature type="mutagenesis site" description="Impairs self-assembly of N-terminal ends." evidence="5">
    <location>
        <begin position="101"/>
        <end position="111"/>
    </location>
</feature>
<feature type="mutagenesis site" description="Impairs self-assembly of N-terminal ends; when associated with E-109. Abolishes the formation of higher-order heterooligomers with SYCE3; when associated with E-109." evidence="5 6">
    <original>V</original>
    <variation>E</variation>
    <location>
        <position position="105"/>
    </location>
</feature>
<feature type="mutagenesis site" description="Impairs self-assembly of N-terminal ends; when associated with E-105. Abolishes the formation of higher-order heterooligomers with SYCE3; when associated with E-105." evidence="5 6">
    <original>L</original>
    <variation>E</variation>
    <location>
        <position position="109"/>
    </location>
</feature>
<feature type="mutagenesis site" description="Impairs pH-induced C-terminal tetrameric self-assembly; when associated with A-688." evidence="5">
    <original>L</original>
    <variation>A</variation>
    <location>
        <position position="679"/>
    </location>
</feature>
<feature type="mutagenesis site" description="Impairs pH-induced C-terminal tetrameric self-assembly; when associated with A-679." evidence="5">
    <original>I</original>
    <variation>A</variation>
    <location>
        <position position="688"/>
    </location>
</feature>
<feature type="mutagenesis site" description="Impairs pH-induced C-terminal tetrameric self-assembly." evidence="5">
    <original>H</original>
    <variation>E</variation>
    <location>
        <position position="717"/>
    </location>
</feature>
<feature type="mutagenesis site" description="Enables C-terminal tetrameric self-assembly at pH 8.0; when associated with F-721." evidence="5">
    <original>H</original>
    <variation>W</variation>
    <location>
        <position position="717"/>
    </location>
</feature>
<feature type="mutagenesis site" description="Enables C-terminal tetrameric self-assembly at pH 8.0; when associated with W-717." evidence="5">
    <original>Y</original>
    <variation>F</variation>
    <location>
        <position position="721"/>
    </location>
</feature>
<feature type="sequence conflict" description="In Ref. 1; CAA64956." evidence="12" ref="1">
    <original>F</original>
    <variation>L</variation>
    <location>
        <position position="46"/>
    </location>
</feature>
<feature type="sequence conflict" description="In Ref. 1; CAA64956." evidence="12" ref="1">
    <original>Y</original>
    <variation>F</variation>
    <location>
        <position position="106"/>
    </location>
</feature>
<feature type="sequence conflict" description="In Ref. 2; BAA22586." evidence="12" ref="2">
    <original>F</original>
    <variation>C</variation>
    <location>
        <position position="153"/>
    </location>
</feature>
<feature type="sequence conflict" description="In Ref. 2; BAA22586." evidence="12" ref="2">
    <original>K</original>
    <variation>T</variation>
    <location>
        <position position="161"/>
    </location>
</feature>
<feature type="sequence conflict" description="In Ref. 2; BAA22586." evidence="12" ref="2">
    <original>E</original>
    <variation>D</variation>
    <location>
        <position position="168"/>
    </location>
</feature>
<feature type="sequence conflict" description="In Ref. 2; BAA22586." evidence="12" ref="2">
    <original>N</original>
    <variation>S</variation>
    <location>
        <position position="216"/>
    </location>
</feature>
<feature type="sequence conflict" description="In Ref. 1; CAA64956." evidence="12" ref="1">
    <original>FE</original>
    <variation>HG</variation>
    <location>
        <begin position="225"/>
        <end position="226"/>
    </location>
</feature>
<feature type="sequence conflict" description="In Ref. 2; BAA22586." evidence="12" ref="2">
    <original>K</original>
    <variation>N</variation>
    <location>
        <position position="350"/>
    </location>
</feature>
<feature type="sequence conflict" description="In Ref. 2; BAA22586." evidence="12" ref="2">
    <original>E</original>
    <variation>D</variation>
    <location>
        <position position="360"/>
    </location>
</feature>
<feature type="sequence conflict" description="In Ref. 2; BAA22586." evidence="12" ref="2">
    <original>KN</original>
    <variation>NY</variation>
    <location>
        <begin position="400"/>
        <end position="401"/>
    </location>
</feature>
<feature type="sequence conflict" description="In Ref. 2; BAA22586." evidence="12" ref="2">
    <original>K</original>
    <variation>I</variation>
    <location>
        <position position="406"/>
    </location>
</feature>
<feature type="sequence conflict" description="In Ref. 2; BAA22586." evidence="12" ref="2">
    <original>K</original>
    <variation>T</variation>
    <location>
        <position position="415"/>
    </location>
</feature>
<feature type="sequence conflict" description="In Ref. 2; BAA22586." evidence="12" ref="2">
    <original>E</original>
    <variation>D</variation>
    <location>
        <position position="449"/>
    </location>
</feature>
<feature type="sequence conflict" description="In Ref. 2; BAA22586." evidence="12" ref="2">
    <original>IQLTAITTSEQYYSKEVKDLKTELENEK</original>
    <variation>YSYCHYHKWTVLPKRGQRPKLSSKRE</variation>
    <location>
        <begin position="483"/>
        <end position="510"/>
    </location>
</feature>
<feature type="sequence conflict" description="In Ref. 2; BAA22586." evidence="12" ref="2">
    <original>LTSHCNKLSLENK</original>
    <variation>YFTLQQASPPPN</variation>
    <location>
        <begin position="516"/>
        <end position="528"/>
    </location>
</feature>
<feature type="sequence conflict" description="In Ref. 2; BAA22586." evidence="12" ref="2">
    <original>N</original>
    <variation>I</variation>
    <location>
        <position position="549"/>
    </location>
</feature>
<feature type="sequence conflict" description="In Ref. 2; BAA22586." evidence="12" ref="2">
    <original>K</original>
    <variation>T</variation>
    <location>
        <position position="560"/>
    </location>
</feature>
<feature type="sequence conflict" description="In Ref. 1; CAA64956." evidence="12" ref="1">
    <original>S</original>
    <variation>P</variation>
    <location>
        <position position="941"/>
    </location>
</feature>
<feature type="helix" evidence="15">
    <location>
        <begin position="101"/>
        <end position="170"/>
    </location>
</feature>
<feature type="helix" evidence="14">
    <location>
        <begin position="675"/>
        <end position="726"/>
    </location>
</feature>
<feature type="helix" evidence="14">
    <location>
        <begin position="728"/>
        <end position="765"/>
    </location>
</feature>
<organism>
    <name type="scientific">Homo sapiens</name>
    <name type="common">Human</name>
    <dbReference type="NCBI Taxonomy" id="9606"/>
    <lineage>
        <taxon>Eukaryota</taxon>
        <taxon>Metazoa</taxon>
        <taxon>Chordata</taxon>
        <taxon>Craniata</taxon>
        <taxon>Vertebrata</taxon>
        <taxon>Euteleostomi</taxon>
        <taxon>Mammalia</taxon>
        <taxon>Eutheria</taxon>
        <taxon>Euarchontoglires</taxon>
        <taxon>Primates</taxon>
        <taxon>Haplorrhini</taxon>
        <taxon>Catarrhini</taxon>
        <taxon>Hominidae</taxon>
        <taxon>Homo</taxon>
    </lineage>
</organism>
<gene>
    <name evidence="9 13" type="primary">SYCP1</name>
    <name evidence="11" type="synonym">SCP1</name>
</gene>
<comment type="function">
    <text evidence="2">Major component of the transverse filaments of synaptonemal complexes, formed between homologous chromosomes during meiotic prophase. Required for normal assembly of the central element of the synaptonemal complexes. Required for normal centromere pairing during meiosis. Required for normal meiotic chromosome synapsis during oocyte and spermatocyte development and for normal male and female fertility.</text>
</comment>
<comment type="subunit">
    <text evidence="2 4 5 6">Structural component of synaptonemal complexes (By similarity). Homotetramer that consists of an N-terminal four-helical bundle that bifurcates into two elongated C-terminal dimeric coiled coils (PubMed:26323297, PubMed:29915389, PubMed:36635604). This tetrameric building block potentially self-assembles into a supramolecular zipper-like lattice to mediate meiotic chromosome synapsis. Self-assembly is likely initiated by local proton density at chromosome axis, which is predicted to trigger antiparallel back to back assembly of adjacent C-terminal ends into tetrameric structures that anchor to chromosomal DNA. Then the N-terminal ends are predicted to undergo cooperative antiparallel head to head assembly at the midline of synaptonemal complexes central element to form a zipper-like lattice between properly aligned homologous chromosomes (PubMed:29915389). The nascent synapsis generated by SYCP1 is stabilized through interaction with central element proteins SYCE1 and SYCE2 (By similarity). Interacts (via tetrameric core) with SYCE3; the interaction remodels SYCP1 homotetramers to 2:1 heterotrimers with SYCE3 (PubMed:36635604). SYCP1/SYCE3 heterotrimers form lattice assemblies as part of the mature synaptonemal complex via both lateral and head-to-head interactions (PubMed:36635604). Forms a complex with EWSR1, PRDM9, SYCP3 and REC8; complex formation is dependent of phosphorylated form of REC8 and requires PRDM9 bound to hotspot DNA; EWSR1 joins PRDM9 with the chromosomal axis through REC8 (By similarity). Interacts with SPO16 (By similarity).</text>
</comment>
<comment type="subcellular location">
    <subcellularLocation>
        <location evidence="2">Nucleus</location>
    </subcellularLocation>
    <subcellularLocation>
        <location evidence="2">Chromosome</location>
    </subcellularLocation>
    <subcellularLocation>
        <location evidence="2">Chromosome</location>
        <location evidence="2">Centromere</location>
    </subcellularLocation>
    <text evidence="1 2">In tripartite segments of synaptonemal complexes, between lateral elements in the nucleus. Its N-terminus is found towards the center of the synaptonemal complex while the C-terminus extends well into the lateral domain of the synaptonemal complex (By similarity). Only rarely detected at centromeres during leptotene and zygotene. Detected at centromeres during mid-diplotene, when it is no longer present along chromosome arms. No longer detected at centromeres at later stages of meiosis (By similarity).</text>
</comment>
<comment type="tissue specificity">
    <text evidence="8">Testis.</text>
</comment>
<comment type="domain">
    <text evidence="5">The molecule is in a coiled coil structure that is formed by 4 polypeptide chains. The N-terminal and C-terminal regions exhibit a prominent seven-residues periodicity.</text>
</comment>
<dbReference type="EMBL" id="X95654">
    <property type="protein sequence ID" value="CAA64956.1"/>
    <property type="molecule type" value="mRNA"/>
</dbReference>
<dbReference type="EMBL" id="D67035">
    <property type="protein sequence ID" value="BAA22586.1"/>
    <property type="molecule type" value="mRNA"/>
</dbReference>
<dbReference type="EMBL" id="AL645502">
    <property type="status" value="NOT_ANNOTATED_CDS"/>
    <property type="molecule type" value="Genomic_DNA"/>
</dbReference>
<dbReference type="EMBL" id="AL358372">
    <property type="status" value="NOT_ANNOTATED_CDS"/>
    <property type="molecule type" value="Genomic_DNA"/>
</dbReference>
<dbReference type="EMBL" id="CH471122">
    <property type="protein sequence ID" value="EAW56622.1"/>
    <property type="molecule type" value="Genomic_DNA"/>
</dbReference>
<dbReference type="EMBL" id="BC126266">
    <property type="protein sequence ID" value="AAI26267.1"/>
    <property type="molecule type" value="mRNA"/>
</dbReference>
<dbReference type="CCDS" id="CCDS879.1"/>
<dbReference type="RefSeq" id="NP_001269470.1">
    <property type="nucleotide sequence ID" value="NM_001282541.2"/>
</dbReference>
<dbReference type="RefSeq" id="NP_003167.2">
    <property type="nucleotide sequence ID" value="NM_003176.3"/>
</dbReference>
<dbReference type="RefSeq" id="XP_006710922.1">
    <property type="nucleotide sequence ID" value="XM_006710859.2"/>
</dbReference>
<dbReference type="RefSeq" id="XP_016857673.1">
    <property type="nucleotide sequence ID" value="XM_017002184.2"/>
</dbReference>
<dbReference type="PDB" id="4YTO">
    <property type="method" value="X-ray"/>
    <property type="resolution" value="2.00 A"/>
    <property type="chains" value="A/B=662-801"/>
</dbReference>
<dbReference type="PDB" id="6F5X">
    <property type="method" value="X-ray"/>
    <property type="resolution" value="1.91 A"/>
    <property type="chains" value="A=101-175"/>
</dbReference>
<dbReference type="PDB" id="6F62">
    <property type="method" value="X-ray"/>
    <property type="resolution" value="2.07 A"/>
    <property type="chains" value="A/B=101-206"/>
</dbReference>
<dbReference type="PDB" id="6F63">
    <property type="method" value="X-ray"/>
    <property type="resolution" value="2.15 A"/>
    <property type="chains" value="A/B/C/D=676-770"/>
</dbReference>
<dbReference type="PDB" id="6F64">
    <property type="method" value="X-ray"/>
    <property type="resolution" value="2.49 A"/>
    <property type="chains" value="A=676-770"/>
</dbReference>
<dbReference type="PDBsum" id="4YTO"/>
<dbReference type="PDBsum" id="6F5X"/>
<dbReference type="PDBsum" id="6F62"/>
<dbReference type="PDBsum" id="6F63"/>
<dbReference type="PDBsum" id="6F64"/>
<dbReference type="SMR" id="Q15431"/>
<dbReference type="BioGRID" id="112714">
    <property type="interactions" value="24"/>
</dbReference>
<dbReference type="ComplexPortal" id="CPX-2461">
    <property type="entry name" value="Synaptonemal complex"/>
</dbReference>
<dbReference type="FunCoup" id="Q15431">
    <property type="interactions" value="137"/>
</dbReference>
<dbReference type="IntAct" id="Q15431">
    <property type="interactions" value="7"/>
</dbReference>
<dbReference type="MINT" id="Q15431"/>
<dbReference type="STRING" id="9606.ENSP00000358535"/>
<dbReference type="GlyGen" id="Q15431">
    <property type="glycosylation" value="3 sites, 1 O-linked glycan (3 sites)"/>
</dbReference>
<dbReference type="iPTMnet" id="Q15431"/>
<dbReference type="PhosphoSitePlus" id="Q15431"/>
<dbReference type="SwissPalm" id="Q15431"/>
<dbReference type="BioMuta" id="SYCP1"/>
<dbReference type="DMDM" id="209572682"/>
<dbReference type="jPOST" id="Q15431"/>
<dbReference type="MassIVE" id="Q15431"/>
<dbReference type="PaxDb" id="9606-ENSP00000358535"/>
<dbReference type="PeptideAtlas" id="Q15431"/>
<dbReference type="ProteomicsDB" id="60589"/>
<dbReference type="Antibodypedia" id="20167">
    <property type="antibodies" value="225 antibodies from 25 providers"/>
</dbReference>
<dbReference type="DNASU" id="6847"/>
<dbReference type="Ensembl" id="ENST00000369518.1">
    <property type="protein sequence ID" value="ENSP00000358531.1"/>
    <property type="gene ID" value="ENSG00000198765.12"/>
</dbReference>
<dbReference type="Ensembl" id="ENST00000369522.8">
    <property type="protein sequence ID" value="ENSP00000358535.3"/>
    <property type="gene ID" value="ENSG00000198765.12"/>
</dbReference>
<dbReference type="Ensembl" id="ENST00000618516.4">
    <property type="protein sequence ID" value="ENSP00000480997.1"/>
    <property type="gene ID" value="ENSG00000198765.12"/>
</dbReference>
<dbReference type="GeneID" id="6847"/>
<dbReference type="KEGG" id="hsa:6847"/>
<dbReference type="MANE-Select" id="ENST00000369522.8">
    <property type="protein sequence ID" value="ENSP00000358535.3"/>
    <property type="RefSeq nucleotide sequence ID" value="NM_003176.4"/>
    <property type="RefSeq protein sequence ID" value="NP_003167.2"/>
</dbReference>
<dbReference type="UCSC" id="uc001efq.5">
    <property type="organism name" value="human"/>
</dbReference>
<dbReference type="AGR" id="HGNC:11487"/>
<dbReference type="CTD" id="6847"/>
<dbReference type="DisGeNET" id="6847"/>
<dbReference type="GeneCards" id="SYCP1"/>
<dbReference type="HGNC" id="HGNC:11487">
    <property type="gene designation" value="SYCP1"/>
</dbReference>
<dbReference type="HPA" id="ENSG00000198765">
    <property type="expression patterns" value="Tissue enriched (testis)"/>
</dbReference>
<dbReference type="MIM" id="602162">
    <property type="type" value="gene"/>
</dbReference>
<dbReference type="neXtProt" id="NX_Q15431"/>
<dbReference type="OpenTargets" id="ENSG00000198765"/>
<dbReference type="PharmGKB" id="PA36269"/>
<dbReference type="VEuPathDB" id="HostDB:ENSG00000198765"/>
<dbReference type="eggNOG" id="ENOG502QTHX">
    <property type="taxonomic scope" value="Eukaryota"/>
</dbReference>
<dbReference type="GeneTree" id="ENSGT00390000003368"/>
<dbReference type="InParanoid" id="Q15431"/>
<dbReference type="OMA" id="KHKDQYD"/>
<dbReference type="OrthoDB" id="10064612at2759"/>
<dbReference type="PAN-GO" id="Q15431">
    <property type="GO annotations" value="7 GO annotations based on evolutionary models"/>
</dbReference>
<dbReference type="PhylomeDB" id="Q15431"/>
<dbReference type="TreeFam" id="TF331737"/>
<dbReference type="PathwayCommons" id="Q15431"/>
<dbReference type="Reactome" id="R-HSA-1221632">
    <property type="pathway name" value="Meiotic synapsis"/>
</dbReference>
<dbReference type="SignaLink" id="Q15431"/>
<dbReference type="SIGNOR" id="Q15431"/>
<dbReference type="BioGRID-ORCS" id="6847">
    <property type="hits" value="24 hits in 1150 CRISPR screens"/>
</dbReference>
<dbReference type="ChiTaRS" id="SYCP1">
    <property type="organism name" value="human"/>
</dbReference>
<dbReference type="EvolutionaryTrace" id="Q15431"/>
<dbReference type="GeneWiki" id="SYCP1"/>
<dbReference type="GenomeRNAi" id="6847"/>
<dbReference type="Pharos" id="Q15431">
    <property type="development level" value="Tbio"/>
</dbReference>
<dbReference type="PRO" id="PR:Q15431"/>
<dbReference type="Proteomes" id="UP000005640">
    <property type="component" value="Chromosome 1"/>
</dbReference>
<dbReference type="RNAct" id="Q15431">
    <property type="molecule type" value="protein"/>
</dbReference>
<dbReference type="Bgee" id="ENSG00000198765">
    <property type="expression patterns" value="Expressed in sperm and 84 other cell types or tissues"/>
</dbReference>
<dbReference type="ExpressionAtlas" id="Q15431">
    <property type="expression patterns" value="baseline and differential"/>
</dbReference>
<dbReference type="GO" id="GO:0030849">
    <property type="term" value="C:autosome"/>
    <property type="evidence" value="ECO:0007669"/>
    <property type="project" value="Ensembl"/>
</dbReference>
<dbReference type="GO" id="GO:0000801">
    <property type="term" value="C:central element"/>
    <property type="evidence" value="ECO:0000318"/>
    <property type="project" value="GO_Central"/>
</dbReference>
<dbReference type="GO" id="GO:0005694">
    <property type="term" value="C:chromosome"/>
    <property type="evidence" value="ECO:0000250"/>
    <property type="project" value="UniProtKB"/>
</dbReference>
<dbReference type="GO" id="GO:0000775">
    <property type="term" value="C:chromosome, centromeric region"/>
    <property type="evidence" value="ECO:0007669"/>
    <property type="project" value="UniProtKB-SubCell"/>
</dbReference>
<dbReference type="GO" id="GO:0001673">
    <property type="term" value="C:male germ cell nucleus"/>
    <property type="evidence" value="ECO:0000318"/>
    <property type="project" value="GO_Central"/>
</dbReference>
<dbReference type="GO" id="GO:0000795">
    <property type="term" value="C:synaptonemal complex"/>
    <property type="evidence" value="ECO:0000250"/>
    <property type="project" value="UniProtKB"/>
</dbReference>
<dbReference type="GO" id="GO:0000802">
    <property type="term" value="C:transverse filament"/>
    <property type="evidence" value="ECO:0000318"/>
    <property type="project" value="GO_Central"/>
</dbReference>
<dbReference type="GO" id="GO:0003677">
    <property type="term" value="F:DNA binding"/>
    <property type="evidence" value="ECO:0000304"/>
    <property type="project" value="ProtInc"/>
</dbReference>
<dbReference type="GO" id="GO:0003690">
    <property type="term" value="F:double-stranded DNA binding"/>
    <property type="evidence" value="ECO:0000314"/>
    <property type="project" value="UniProtKB"/>
</dbReference>
<dbReference type="GO" id="GO:0051301">
    <property type="term" value="P:cell division"/>
    <property type="evidence" value="ECO:0007669"/>
    <property type="project" value="UniProtKB-KW"/>
</dbReference>
<dbReference type="GO" id="GO:0051026">
    <property type="term" value="P:chiasma assembly"/>
    <property type="evidence" value="ECO:0000318"/>
    <property type="project" value="GO_Central"/>
</dbReference>
<dbReference type="GO" id="GO:0007129">
    <property type="term" value="P:homologous chromosome pairing at meiosis"/>
    <property type="evidence" value="ECO:0000250"/>
    <property type="project" value="UniProtKB"/>
</dbReference>
<dbReference type="GO" id="GO:0051878">
    <property type="term" value="P:lateral element assembly"/>
    <property type="evidence" value="ECO:0000318"/>
    <property type="project" value="GO_Central"/>
</dbReference>
<dbReference type="GO" id="GO:0000711">
    <property type="term" value="P:meiotic DNA repair synthesis"/>
    <property type="evidence" value="ECO:0000318"/>
    <property type="project" value="GO_Central"/>
</dbReference>
<dbReference type="GO" id="GO:0051289">
    <property type="term" value="P:protein homotetramerization"/>
    <property type="evidence" value="ECO:0000314"/>
    <property type="project" value="UniProtKB"/>
</dbReference>
<dbReference type="GO" id="GO:0007131">
    <property type="term" value="P:reciprocal meiotic recombination"/>
    <property type="evidence" value="ECO:0000250"/>
    <property type="project" value="UniProtKB"/>
</dbReference>
<dbReference type="GO" id="GO:0032880">
    <property type="term" value="P:regulation of protein localization"/>
    <property type="evidence" value="ECO:0007669"/>
    <property type="project" value="Ensembl"/>
</dbReference>
<dbReference type="GO" id="GO:0035092">
    <property type="term" value="P:sperm DNA condensation"/>
    <property type="evidence" value="ECO:0007669"/>
    <property type="project" value="Ensembl"/>
</dbReference>
<dbReference type="GO" id="GO:0007283">
    <property type="term" value="P:spermatogenesis"/>
    <property type="evidence" value="ECO:0000304"/>
    <property type="project" value="ProtInc"/>
</dbReference>
<dbReference type="GO" id="GO:0007130">
    <property type="term" value="P:synaptonemal complex assembly"/>
    <property type="evidence" value="ECO:0000250"/>
    <property type="project" value="UniProtKB"/>
</dbReference>
<dbReference type="InterPro" id="IPR008827">
    <property type="entry name" value="SYCP1"/>
</dbReference>
<dbReference type="PANTHER" id="PTHR46918">
    <property type="entry name" value="SYNAPTONEMAL COMPLEX PROTEIN 1"/>
    <property type="match status" value="1"/>
</dbReference>
<dbReference type="PANTHER" id="PTHR46918:SF1">
    <property type="entry name" value="SYNAPTONEMAL COMPLEX PROTEIN 1"/>
    <property type="match status" value="1"/>
</dbReference>
<dbReference type="Pfam" id="PF05483">
    <property type="entry name" value="SCP-1"/>
    <property type="match status" value="1"/>
</dbReference>
<name>SYCP1_HUMAN</name>
<proteinExistence type="evidence at protein level"/>
<accession>Q15431</accession>
<accession>O14963</accession>
<accession>Q5VXJ6</accession>
<keyword id="KW-0002">3D-structure</keyword>
<keyword id="KW-0131">Cell cycle</keyword>
<keyword id="KW-0132">Cell division</keyword>
<keyword id="KW-0137">Centromere</keyword>
<keyword id="KW-0158">Chromosome</keyword>
<keyword id="KW-0175">Coiled coil</keyword>
<keyword id="KW-0238">DNA-binding</keyword>
<keyword id="KW-0469">Meiosis</keyword>
<keyword id="KW-0539">Nucleus</keyword>
<keyword id="KW-1267">Proteomics identification</keyword>
<keyword id="KW-1185">Reference proteome</keyword>
<reference key="1">
    <citation type="journal article" date="1997" name="Genomics">
        <title>Human synaptonemal complex protein 1 (SCP1): isolation and characterization of the cDNA and chromosomal localization of the gene.</title>
        <authorList>
            <person name="Meuwissen R.L.J."/>
            <person name="Meerts I."/>
            <person name="Hoovers J.M.N."/>
            <person name="Leschot N.J."/>
            <person name="Heyting C."/>
        </authorList>
    </citation>
    <scope>NUCLEOTIDE SEQUENCE [MRNA]</scope>
    <scope>VARIANT ASP-805</scope>
    <source>
        <tissue>Testis</tissue>
    </source>
</reference>
<reference key="2">
    <citation type="journal article" date="1997" name="Cytogenet. Cell Genet.">
        <title>Assignment of synaptonemal complex protein 1 (SCP1) to human chromosome 1p13 by fluorescence in situ hybridization and its expression in the testis.</title>
        <authorList>
            <person name="Kondoh N."/>
            <person name="Nishina Y."/>
            <person name="Tsuchida J."/>
            <person name="Koga M."/>
            <person name="Tanaka H."/>
            <person name="Uchida K."/>
            <person name="Inazawa J."/>
            <person name="Taketo M."/>
            <person name="Nozaki M."/>
            <person name="Nojima H."/>
            <person name="Matsumiya K."/>
            <person name="Namiki M."/>
            <person name="Okuyama A."/>
            <person name="Nishimune Y."/>
        </authorList>
    </citation>
    <scope>NUCLEOTIDE SEQUENCE [MRNA]</scope>
    <scope>TISSUE SPECIFICITY</scope>
    <source>
        <tissue>Testis</tissue>
    </source>
</reference>
<reference key="3">
    <citation type="journal article" date="2006" name="Nature">
        <title>The DNA sequence and biological annotation of human chromosome 1.</title>
        <authorList>
            <person name="Gregory S.G."/>
            <person name="Barlow K.F."/>
            <person name="McLay K.E."/>
            <person name="Kaul R."/>
            <person name="Swarbreck D."/>
            <person name="Dunham A."/>
            <person name="Scott C.E."/>
            <person name="Howe K.L."/>
            <person name="Woodfine K."/>
            <person name="Spencer C.C.A."/>
            <person name="Jones M.C."/>
            <person name="Gillson C."/>
            <person name="Searle S."/>
            <person name="Zhou Y."/>
            <person name="Kokocinski F."/>
            <person name="McDonald L."/>
            <person name="Evans R."/>
            <person name="Phillips K."/>
            <person name="Atkinson A."/>
            <person name="Cooper R."/>
            <person name="Jones C."/>
            <person name="Hall R.E."/>
            <person name="Andrews T.D."/>
            <person name="Lloyd C."/>
            <person name="Ainscough R."/>
            <person name="Almeida J.P."/>
            <person name="Ambrose K.D."/>
            <person name="Anderson F."/>
            <person name="Andrew R.W."/>
            <person name="Ashwell R.I.S."/>
            <person name="Aubin K."/>
            <person name="Babbage A.K."/>
            <person name="Bagguley C.L."/>
            <person name="Bailey J."/>
            <person name="Beasley H."/>
            <person name="Bethel G."/>
            <person name="Bird C.P."/>
            <person name="Bray-Allen S."/>
            <person name="Brown J.Y."/>
            <person name="Brown A.J."/>
            <person name="Buckley D."/>
            <person name="Burton J."/>
            <person name="Bye J."/>
            <person name="Carder C."/>
            <person name="Chapman J.C."/>
            <person name="Clark S.Y."/>
            <person name="Clarke G."/>
            <person name="Clee C."/>
            <person name="Cobley V."/>
            <person name="Collier R.E."/>
            <person name="Corby N."/>
            <person name="Coville G.J."/>
            <person name="Davies J."/>
            <person name="Deadman R."/>
            <person name="Dunn M."/>
            <person name="Earthrowl M."/>
            <person name="Ellington A.G."/>
            <person name="Errington H."/>
            <person name="Frankish A."/>
            <person name="Frankland J."/>
            <person name="French L."/>
            <person name="Garner P."/>
            <person name="Garnett J."/>
            <person name="Gay L."/>
            <person name="Ghori M.R.J."/>
            <person name="Gibson R."/>
            <person name="Gilby L.M."/>
            <person name="Gillett W."/>
            <person name="Glithero R.J."/>
            <person name="Grafham D.V."/>
            <person name="Griffiths C."/>
            <person name="Griffiths-Jones S."/>
            <person name="Grocock R."/>
            <person name="Hammond S."/>
            <person name="Harrison E.S.I."/>
            <person name="Hart E."/>
            <person name="Haugen E."/>
            <person name="Heath P.D."/>
            <person name="Holmes S."/>
            <person name="Holt K."/>
            <person name="Howden P.J."/>
            <person name="Hunt A.R."/>
            <person name="Hunt S.E."/>
            <person name="Hunter G."/>
            <person name="Isherwood J."/>
            <person name="James R."/>
            <person name="Johnson C."/>
            <person name="Johnson D."/>
            <person name="Joy A."/>
            <person name="Kay M."/>
            <person name="Kershaw J.K."/>
            <person name="Kibukawa M."/>
            <person name="Kimberley A.M."/>
            <person name="King A."/>
            <person name="Knights A.J."/>
            <person name="Lad H."/>
            <person name="Laird G."/>
            <person name="Lawlor S."/>
            <person name="Leongamornlert D.A."/>
            <person name="Lloyd D.M."/>
            <person name="Loveland J."/>
            <person name="Lovell J."/>
            <person name="Lush M.J."/>
            <person name="Lyne R."/>
            <person name="Martin S."/>
            <person name="Mashreghi-Mohammadi M."/>
            <person name="Matthews L."/>
            <person name="Matthews N.S.W."/>
            <person name="McLaren S."/>
            <person name="Milne S."/>
            <person name="Mistry S."/>
            <person name="Moore M.J.F."/>
            <person name="Nickerson T."/>
            <person name="O'Dell C.N."/>
            <person name="Oliver K."/>
            <person name="Palmeiri A."/>
            <person name="Palmer S.A."/>
            <person name="Parker A."/>
            <person name="Patel D."/>
            <person name="Pearce A.V."/>
            <person name="Peck A.I."/>
            <person name="Pelan S."/>
            <person name="Phelps K."/>
            <person name="Phillimore B.J."/>
            <person name="Plumb R."/>
            <person name="Rajan J."/>
            <person name="Raymond C."/>
            <person name="Rouse G."/>
            <person name="Saenphimmachak C."/>
            <person name="Sehra H.K."/>
            <person name="Sheridan E."/>
            <person name="Shownkeen R."/>
            <person name="Sims S."/>
            <person name="Skuce C.D."/>
            <person name="Smith M."/>
            <person name="Steward C."/>
            <person name="Subramanian S."/>
            <person name="Sycamore N."/>
            <person name="Tracey A."/>
            <person name="Tromans A."/>
            <person name="Van Helmond Z."/>
            <person name="Wall M."/>
            <person name="Wallis J.M."/>
            <person name="White S."/>
            <person name="Whitehead S.L."/>
            <person name="Wilkinson J.E."/>
            <person name="Willey D.L."/>
            <person name="Williams H."/>
            <person name="Wilming L."/>
            <person name="Wray P.W."/>
            <person name="Wu Z."/>
            <person name="Coulson A."/>
            <person name="Vaudin M."/>
            <person name="Sulston J.E."/>
            <person name="Durbin R.M."/>
            <person name="Hubbard T."/>
            <person name="Wooster R."/>
            <person name="Dunham I."/>
            <person name="Carter N.P."/>
            <person name="McVean G."/>
            <person name="Ross M.T."/>
            <person name="Harrow J."/>
            <person name="Olson M.V."/>
            <person name="Beck S."/>
            <person name="Rogers J."/>
            <person name="Bentley D.R."/>
        </authorList>
    </citation>
    <scope>NUCLEOTIDE SEQUENCE [LARGE SCALE GENOMIC DNA]</scope>
</reference>
<reference key="4">
    <citation type="submission" date="2005-07" db="EMBL/GenBank/DDBJ databases">
        <authorList>
            <person name="Mural R.J."/>
            <person name="Istrail S."/>
            <person name="Sutton G.G."/>
            <person name="Florea L."/>
            <person name="Halpern A.L."/>
            <person name="Mobarry C.M."/>
            <person name="Lippert R."/>
            <person name="Walenz B."/>
            <person name="Shatkay H."/>
            <person name="Dew I."/>
            <person name="Miller J.R."/>
            <person name="Flanigan M.J."/>
            <person name="Edwards N.J."/>
            <person name="Bolanos R."/>
            <person name="Fasulo D."/>
            <person name="Halldorsson B.V."/>
            <person name="Hannenhalli S."/>
            <person name="Turner R."/>
            <person name="Yooseph S."/>
            <person name="Lu F."/>
            <person name="Nusskern D.R."/>
            <person name="Shue B.C."/>
            <person name="Zheng X.H."/>
            <person name="Zhong F."/>
            <person name="Delcher A.L."/>
            <person name="Huson D.H."/>
            <person name="Kravitz S.A."/>
            <person name="Mouchard L."/>
            <person name="Reinert K."/>
            <person name="Remington K.A."/>
            <person name="Clark A.G."/>
            <person name="Waterman M.S."/>
            <person name="Eichler E.E."/>
            <person name="Adams M.D."/>
            <person name="Hunkapiller M.W."/>
            <person name="Myers E.W."/>
            <person name="Venter J.C."/>
        </authorList>
    </citation>
    <scope>NUCLEOTIDE SEQUENCE [LARGE SCALE GENOMIC DNA]</scope>
</reference>
<reference key="5">
    <citation type="journal article" date="2004" name="Genome Res.">
        <title>The status, quality, and expansion of the NIH full-length cDNA project: the Mammalian Gene Collection (MGC).</title>
        <authorList>
            <consortium name="The MGC Project Team"/>
        </authorList>
    </citation>
    <scope>NUCLEOTIDE SEQUENCE [LARGE SCALE MRNA]</scope>
    <source>
        <tissue>Testis</tissue>
    </source>
</reference>
<reference key="6">
    <citation type="journal article" date="2023" name="Nat. Struct. Mol. Biol.">
        <title>Structural maturation of SYCP1-mediated meiotic chromosome synapsis by SYCE3.</title>
        <authorList>
            <person name="Crichton J.H."/>
            <person name="Dunce J.M."/>
            <person name="Dunne O.M."/>
            <person name="Salmon L.J."/>
            <person name="Devenney P.S."/>
            <person name="Lawson J."/>
            <person name="Adams I.R."/>
            <person name="Davies O.R."/>
        </authorList>
    </citation>
    <scope>SUBUNIT</scope>
    <scope>INTERACTION WITH SYCE3</scope>
    <scope>MUTAGENESIS OF VAL-105 AND LEU-109</scope>
</reference>
<reference key="7">
    <citation type="journal article" date="2015" name="Acta Crystallogr. F">
        <title>X-ray crystallographic studies of the middle part of the human synaptonemal complex protein 1 coiled-coil domain.</title>
        <authorList>
            <person name="Park H.H."/>
        </authorList>
    </citation>
    <scope>CRYSTALLIZATION</scope>
    <scope>SUBUNIT</scope>
</reference>
<reference key="8">
    <citation type="journal article" date="2018" name="Nat. Struct. Mol. Biol.">
        <title>Structural basis of meiotic chromosome synapsis through SYCP1 self-assembly.</title>
        <authorList>
            <person name="Dunce J.M."/>
            <person name="Dunne O.M."/>
            <person name="Ratcliff M."/>
            <person name="Millan C."/>
            <person name="Madgwick S."/>
            <person name="Uson I."/>
            <person name="Davies O.R."/>
        </authorList>
    </citation>
    <scope>X-RAY CRYSTALLOGRAPHY (1.91 ANGSTROMS) OF 101-206</scope>
    <scope>X-RAY CRYSTALLOGRAPHY (2.15 ANGSTROMS) OF 676-770</scope>
    <scope>MUTAGENESIS OF 101-GLY--LYS-111; VAL-105; LEU-109; LEU-679; ILE-688; HIS-717 AND TYR-721</scope>
    <scope>REGION</scope>
    <scope>SUBUNIT</scope>
    <scope>DOMAIN</scope>
    <scope>MOTIF</scope>
</reference>
<protein>
    <recommendedName>
        <fullName evidence="10">Synaptonemal complex protein 1</fullName>
        <shortName>SCP-1</shortName>
    </recommendedName>
    <alternativeName>
        <fullName>Cancer/testis antigen 8</fullName>
        <shortName>CT8</shortName>
    </alternativeName>
</protein>
<evidence type="ECO:0000250" key="1">
    <source>
        <dbReference type="UniProtKB" id="Q03410"/>
    </source>
</evidence>
<evidence type="ECO:0000250" key="2">
    <source>
        <dbReference type="UniProtKB" id="Q62209"/>
    </source>
</evidence>
<evidence type="ECO:0000255" key="3"/>
<evidence type="ECO:0000269" key="4">
    <source>
    </source>
</evidence>
<evidence type="ECO:0000269" key="5">
    <source>
    </source>
</evidence>
<evidence type="ECO:0000269" key="6">
    <source>
    </source>
</evidence>
<evidence type="ECO:0000269" key="7">
    <source>
    </source>
</evidence>
<evidence type="ECO:0000269" key="8">
    <source>
    </source>
</evidence>
<evidence type="ECO:0000303" key="9">
    <source>
    </source>
</evidence>
<evidence type="ECO:0000303" key="10">
    <source>
    </source>
</evidence>
<evidence type="ECO:0000303" key="11">
    <source>
    </source>
</evidence>
<evidence type="ECO:0000305" key="12"/>
<evidence type="ECO:0000312" key="13">
    <source>
        <dbReference type="HGNC" id="HGNC:11487"/>
    </source>
</evidence>
<evidence type="ECO:0007829" key="14">
    <source>
        <dbReference type="PDB" id="4YTO"/>
    </source>
</evidence>
<evidence type="ECO:0007829" key="15">
    <source>
        <dbReference type="PDB" id="6F5X"/>
    </source>
</evidence>